<comment type="similarity">
    <text evidence="1">Belongs to the herpesviridae UL96 family.</text>
</comment>
<reference key="1">
    <citation type="journal article" date="1999" name="J. Virol.">
        <title>Human herpesvirus 6B genome sequence: coding content and comparison with human herpesvirus 6A.</title>
        <authorList>
            <person name="Dominguez G."/>
            <person name="Dambaugh T.R."/>
            <person name="Stamey F.R."/>
            <person name="Dewhurst S."/>
            <person name="Inoue N."/>
            <person name="Pellett P.E."/>
        </authorList>
    </citation>
    <scope>NUCLEOTIDE SEQUENCE [LARGE SCALE GENOMIC DNA]</scope>
</reference>
<feature type="chain" id="PRO_0000408444" description="Protein U68">
    <location>
        <begin position="1"/>
        <end position="114"/>
    </location>
</feature>
<proteinExistence type="inferred from homology"/>
<gene>
    <name type="primary">U68</name>
</gene>
<organismHost>
    <name type="scientific">Homo sapiens</name>
    <name type="common">Human</name>
    <dbReference type="NCBI Taxonomy" id="9606"/>
</organismHost>
<evidence type="ECO:0000305" key="1"/>
<name>UL96_HHV6Z</name>
<organism>
    <name type="scientific">Human herpesvirus 6B (strain Z29)</name>
    <name type="common">HHV-6 variant B</name>
    <name type="synonym">Human B lymphotropic virus</name>
    <dbReference type="NCBI Taxonomy" id="36351"/>
    <lineage>
        <taxon>Viruses</taxon>
        <taxon>Duplodnaviria</taxon>
        <taxon>Heunggongvirae</taxon>
        <taxon>Peploviricota</taxon>
        <taxon>Herviviricetes</taxon>
        <taxon>Herpesvirales</taxon>
        <taxon>Orthoherpesviridae</taxon>
        <taxon>Betaherpesvirinae</taxon>
        <taxon>Roseolovirus</taxon>
        <taxon>Roseolovirus humanbeta6b</taxon>
        <taxon>Human herpesvirus 6B</taxon>
    </lineage>
</organism>
<keyword id="KW-1185">Reference proteome</keyword>
<protein>
    <recommendedName>
        <fullName>Protein U68</fullName>
    </recommendedName>
</protein>
<sequence>MSLKDYLRQSISKDLEVRHRDSLKIRLGERHPLSVHQHMIAARQIIKSDNAEHQHVISSLSGFLDKQKSFLKVQQRALKQLEKLDVDEIIDTAAEVKAVSNNIKETLMASTELE</sequence>
<accession>Q9QJ18</accession>
<dbReference type="EMBL" id="AF157706">
    <property type="protein sequence ID" value="AAD49669.1"/>
    <property type="molecule type" value="Genomic_DNA"/>
</dbReference>
<dbReference type="RefSeq" id="NP_050247.1">
    <property type="nucleotide sequence ID" value="NC_000898.1"/>
</dbReference>
<dbReference type="SMR" id="Q9QJ18"/>
<dbReference type="DNASU" id="1497068"/>
<dbReference type="GeneID" id="1497068"/>
<dbReference type="KEGG" id="vg:1497068"/>
<dbReference type="Proteomes" id="UP000006930">
    <property type="component" value="Segment"/>
</dbReference>
<dbReference type="InterPro" id="IPR022614">
    <property type="entry name" value="Herpesvirus_UL96"/>
</dbReference>
<dbReference type="Pfam" id="PF10867">
    <property type="entry name" value="DUF2664"/>
    <property type="match status" value="1"/>
</dbReference>